<dbReference type="EMBL" id="AB055959">
    <property type="protein sequence ID" value="BAC54547.1"/>
    <property type="molecule type" value="Genomic_DNA"/>
</dbReference>
<dbReference type="EMBL" id="CH986436">
    <property type="protein sequence ID" value="EDX15953.1"/>
    <property type="molecule type" value="Genomic_DNA"/>
</dbReference>
<dbReference type="EMBL" id="CH986794">
    <property type="protein sequence ID" value="EDX15974.1"/>
    <property type="molecule type" value="Genomic_DNA"/>
</dbReference>
<dbReference type="EMBL" id="CH987252">
    <property type="protein sequence ID" value="EDX16002.1"/>
    <property type="molecule type" value="Genomic_DNA"/>
</dbReference>
<dbReference type="EMBL" id="CH987286">
    <property type="protein sequence ID" value="EDX16007.1"/>
    <property type="molecule type" value="Genomic_DNA"/>
</dbReference>
<dbReference type="EMBL" id="CH988002">
    <property type="protein sequence ID" value="EDX16053.1"/>
    <property type="molecule type" value="Genomic_DNA"/>
</dbReference>
<dbReference type="EMBL" id="CH988652">
    <property type="protein sequence ID" value="EDX16098.1"/>
    <property type="molecule type" value="Genomic_DNA"/>
</dbReference>
<dbReference type="EMBL" id="CH988719">
    <property type="protein sequence ID" value="EDX16106.1"/>
    <property type="molecule type" value="Genomic_DNA"/>
</dbReference>
<dbReference type="EMBL" id="CH989288">
    <property type="protein sequence ID" value="EDX16152.1"/>
    <property type="molecule type" value="Genomic_DNA"/>
</dbReference>
<dbReference type="EMBL" id="CH989298">
    <property type="protein sequence ID" value="EDX16154.1"/>
    <property type="molecule type" value="Genomic_DNA"/>
</dbReference>
<dbReference type="EMBL" id="CH990027">
    <property type="protein sequence ID" value="EDX16208.1"/>
    <property type="molecule type" value="Genomic_DNA"/>
</dbReference>
<dbReference type="EMBL" id="CH991103">
    <property type="protein sequence ID" value="EDX16251.1"/>
    <property type="molecule type" value="Genomic_DNA"/>
</dbReference>
<dbReference type="EMBL" id="CM000364">
    <property type="protein sequence ID" value="EDX12930.1"/>
    <property type="molecule type" value="Genomic_DNA"/>
</dbReference>
<dbReference type="RefSeq" id="XP_002077371.1">
    <property type="nucleotide sequence ID" value="XM_002077335.2"/>
</dbReference>
<dbReference type="SMR" id="P84043"/>
<dbReference type="STRING" id="7240.P84043"/>
<dbReference type="EnsemblMetazoa" id="FBtr0212484">
    <property type="protein sequence ID" value="FBpp0210976"/>
    <property type="gene ID" value="FBgn0184301"/>
</dbReference>
<dbReference type="EnsemblMetazoa" id="FBtr0218878">
    <property type="protein sequence ID" value="FBpp0217370"/>
    <property type="gene ID" value="FBgn0190477"/>
</dbReference>
<dbReference type="EnsemblMetazoa" id="FBtr0356260">
    <property type="protein sequence ID" value="FBpp0320456"/>
    <property type="gene ID" value="FBgn0190477"/>
</dbReference>
<dbReference type="EnsemblMetazoa" id="XM_016175314.3">
    <property type="protein sequence ID" value="XP_016034694.1"/>
    <property type="gene ID" value="LOC6728075"/>
</dbReference>
<dbReference type="EnsemblMetazoa" id="XM_016175315.3">
    <property type="protein sequence ID" value="XP_016034695.1"/>
    <property type="gene ID" value="LOC6728075"/>
</dbReference>
<dbReference type="EnsemblMetazoa" id="XM_039296764.2">
    <property type="protein sequence ID" value="XP_039152698.1"/>
    <property type="gene ID" value="LOC120285281"/>
</dbReference>
<dbReference type="EnsemblMetazoa" id="XM_039296765.2">
    <property type="protein sequence ID" value="XP_039152699.1"/>
    <property type="gene ID" value="LOC120285282"/>
</dbReference>
<dbReference type="EnsemblMetazoa" id="XM_039296770.2">
    <property type="protein sequence ID" value="XP_039152704.1"/>
    <property type="gene ID" value="LOC120285283"/>
</dbReference>
<dbReference type="EnsemblMetazoa" id="XM_039296772.2">
    <property type="protein sequence ID" value="XP_039152706.1"/>
    <property type="gene ID" value="LOC120285285"/>
</dbReference>
<dbReference type="EnsemblMetazoa" id="XM_039296777.2">
    <property type="protein sequence ID" value="XP_039152711.1"/>
    <property type="gene ID" value="LOC120285286"/>
</dbReference>
<dbReference type="EnsemblMetazoa" id="XM_039296788.2">
    <property type="protein sequence ID" value="XP_039152722.1"/>
    <property type="gene ID" value="LOC120285287"/>
</dbReference>
<dbReference type="EnsemblMetazoa" id="XM_039298208.2">
    <property type="protein sequence ID" value="XP_039154142.1"/>
    <property type="gene ID" value="LOC120285551"/>
</dbReference>
<dbReference type="EnsemblMetazoa" id="XM_039298209.2">
    <property type="protein sequence ID" value="XP_039154143.1"/>
    <property type="gene ID" value="LOC120285552"/>
</dbReference>
<dbReference type="EnsemblMetazoa" id="XM_039298210.2">
    <property type="protein sequence ID" value="XP_039154144.1"/>
    <property type="gene ID" value="LOC120285553"/>
</dbReference>
<dbReference type="EnsemblMetazoa" id="XM_039298211.2">
    <property type="protein sequence ID" value="XP_039154145.1"/>
    <property type="gene ID" value="LOC120285554"/>
</dbReference>
<dbReference type="EnsemblMetazoa" id="XM_039298212.2">
    <property type="protein sequence ID" value="XP_039154146.1"/>
    <property type="gene ID" value="LOC120285555"/>
</dbReference>
<dbReference type="EnsemblMetazoa" id="XM_039298213.2">
    <property type="protein sequence ID" value="XP_039154147.1"/>
    <property type="gene ID" value="LOC120285556"/>
</dbReference>
<dbReference type="EnsemblMetazoa" id="XM_039298426.2">
    <property type="protein sequence ID" value="XP_039154360.1"/>
    <property type="gene ID" value="LOC120285811"/>
</dbReference>
<dbReference type="EnsemblMetazoa" id="XM_039298427.2">
    <property type="protein sequence ID" value="XP_039154361.1"/>
    <property type="gene ID" value="LOC120285812"/>
</dbReference>
<dbReference type="EnsemblMetazoa" id="XM_039298428.2">
    <property type="protein sequence ID" value="XP_039154362.1"/>
    <property type="gene ID" value="LOC6740547"/>
</dbReference>
<dbReference type="EnsemblMetazoa" id="XM_039298429.2">
    <property type="protein sequence ID" value="XP_039154363.1"/>
    <property type="gene ID" value="LOC120285813"/>
</dbReference>
<dbReference type="GeneID" id="6728075"/>
<dbReference type="KEGG" id="dsi:Dsimw501_GD18968"/>
<dbReference type="CTD" id="41773"/>
<dbReference type="HOGENOM" id="CLU_109117_2_3_1"/>
<dbReference type="OMA" id="QKEHING"/>
<dbReference type="OrthoDB" id="8179904at2759"/>
<dbReference type="PhylomeDB" id="P84043"/>
<dbReference type="Proteomes" id="UP000000304">
    <property type="component" value="Chromosome 3R"/>
</dbReference>
<dbReference type="Proteomes" id="UP000000304">
    <property type="component" value="Unassembled WGS sequence"/>
</dbReference>
<dbReference type="Bgee" id="FBgn0184301">
    <property type="expression patterns" value="Expressed in embryo and 3 other cell types or tissues"/>
</dbReference>
<dbReference type="GO" id="GO:0000786">
    <property type="term" value="C:nucleosome"/>
    <property type="evidence" value="ECO:0000250"/>
    <property type="project" value="UniProtKB"/>
</dbReference>
<dbReference type="GO" id="GO:0005634">
    <property type="term" value="C:nucleus"/>
    <property type="evidence" value="ECO:0007669"/>
    <property type="project" value="UniProtKB-SubCell"/>
</dbReference>
<dbReference type="GO" id="GO:0003677">
    <property type="term" value="F:DNA binding"/>
    <property type="evidence" value="ECO:0000250"/>
    <property type="project" value="UniProtKB"/>
</dbReference>
<dbReference type="GO" id="GO:0046982">
    <property type="term" value="F:protein heterodimerization activity"/>
    <property type="evidence" value="ECO:0007669"/>
    <property type="project" value="InterPro"/>
</dbReference>
<dbReference type="GO" id="GO:0030527">
    <property type="term" value="F:structural constituent of chromatin"/>
    <property type="evidence" value="ECO:0007669"/>
    <property type="project" value="InterPro"/>
</dbReference>
<dbReference type="GO" id="GO:0006334">
    <property type="term" value="P:nucleosome assembly"/>
    <property type="evidence" value="ECO:0000250"/>
    <property type="project" value="UniProtKB"/>
</dbReference>
<dbReference type="CDD" id="cd22912">
    <property type="entry name" value="HFD_H4"/>
    <property type="match status" value="1"/>
</dbReference>
<dbReference type="FunFam" id="1.10.20.10:FF:000002">
    <property type="entry name" value="Histone H4"/>
    <property type="match status" value="1"/>
</dbReference>
<dbReference type="Gene3D" id="1.10.20.10">
    <property type="entry name" value="Histone, subunit A"/>
    <property type="match status" value="1"/>
</dbReference>
<dbReference type="InterPro" id="IPR035425">
    <property type="entry name" value="CENP-T/H4_C"/>
</dbReference>
<dbReference type="InterPro" id="IPR009072">
    <property type="entry name" value="Histone-fold"/>
</dbReference>
<dbReference type="InterPro" id="IPR001951">
    <property type="entry name" value="Histone_H4"/>
</dbReference>
<dbReference type="InterPro" id="IPR019809">
    <property type="entry name" value="Histone_H4_CS"/>
</dbReference>
<dbReference type="InterPro" id="IPR004823">
    <property type="entry name" value="TAF_TATA-bd_Histone-like_dom"/>
</dbReference>
<dbReference type="PANTHER" id="PTHR10484">
    <property type="entry name" value="HISTONE H4"/>
    <property type="match status" value="1"/>
</dbReference>
<dbReference type="Pfam" id="PF15511">
    <property type="entry name" value="CENP-T_C"/>
    <property type="match status" value="1"/>
</dbReference>
<dbReference type="PRINTS" id="PR00623">
    <property type="entry name" value="HISTONEH4"/>
</dbReference>
<dbReference type="SMART" id="SM00417">
    <property type="entry name" value="H4"/>
    <property type="match status" value="1"/>
</dbReference>
<dbReference type="SMART" id="SM00803">
    <property type="entry name" value="TAF"/>
    <property type="match status" value="1"/>
</dbReference>
<dbReference type="SUPFAM" id="SSF47113">
    <property type="entry name" value="Histone-fold"/>
    <property type="match status" value="1"/>
</dbReference>
<dbReference type="PROSITE" id="PS00047">
    <property type="entry name" value="HISTONE_H4"/>
    <property type="match status" value="1"/>
</dbReference>
<sequence>MTGRGKGGKGLGKGGAKRHRKVLRDNIQGITKPAIRRLARRGGVKRISGLIYEETRGVLKVFLENVIRDAVTYTEHAKRKTVTAMDVVYALKRQGRTLYGFGG</sequence>
<evidence type="ECO:0000250" key="1"/>
<evidence type="ECO:0000250" key="2">
    <source>
        <dbReference type="UniProtKB" id="P62805"/>
    </source>
</evidence>
<evidence type="ECO:0000250" key="3">
    <source>
        <dbReference type="UniProtKB" id="P84040"/>
    </source>
</evidence>
<evidence type="ECO:0000256" key="4">
    <source>
        <dbReference type="SAM" id="MobiDB-lite"/>
    </source>
</evidence>
<evidence type="ECO:0000305" key="5"/>
<protein>
    <recommendedName>
        <fullName>Histone H4</fullName>
    </recommendedName>
</protein>
<gene>
    <name type="primary">His4</name>
    <name type="synonym">H4</name>
</gene>
<gene>
    <name type="ORF">GD12574</name>
</gene>
<gene>
    <name type="ORF">GD18968</name>
</gene>
<accession>P84043</accession>
<accession>B4NV77</accession>
<accession>P02307</accession>
<accession>Q9VFH7</accession>
<organism>
    <name type="scientific">Drosophila simulans</name>
    <name type="common">Fruit fly</name>
    <dbReference type="NCBI Taxonomy" id="7240"/>
    <lineage>
        <taxon>Eukaryota</taxon>
        <taxon>Metazoa</taxon>
        <taxon>Ecdysozoa</taxon>
        <taxon>Arthropoda</taxon>
        <taxon>Hexapoda</taxon>
        <taxon>Insecta</taxon>
        <taxon>Pterygota</taxon>
        <taxon>Neoptera</taxon>
        <taxon>Endopterygota</taxon>
        <taxon>Diptera</taxon>
        <taxon>Brachycera</taxon>
        <taxon>Muscomorpha</taxon>
        <taxon>Ephydroidea</taxon>
        <taxon>Drosophilidae</taxon>
        <taxon>Drosophila</taxon>
        <taxon>Sophophora</taxon>
    </lineage>
</organism>
<feature type="initiator methionine" description="Removed" evidence="1">
    <location>
        <position position="1"/>
    </location>
</feature>
<feature type="chain" id="PRO_0000158308" description="Histone H4">
    <location>
        <begin position="2"/>
        <end position="103"/>
    </location>
</feature>
<feature type="DNA-binding region">
    <location>
        <begin position="17"/>
        <end position="21"/>
    </location>
</feature>
<feature type="region of interest" description="Disordered" evidence="4">
    <location>
        <begin position="1"/>
        <end position="20"/>
    </location>
</feature>
<feature type="compositionally biased region" description="Gly residues" evidence="4">
    <location>
        <begin position="1"/>
        <end position="14"/>
    </location>
</feature>
<feature type="modified residue" description="N6-acetyl-N6-methyllysine; alternate" evidence="2">
    <location>
        <position position="6"/>
    </location>
</feature>
<feature type="modified residue" description="N6-acetyllysine" evidence="3">
    <location>
        <position position="6"/>
    </location>
</feature>
<feature type="modified residue" description="N6-acetyl-N6-methyllysine; alternate" evidence="2">
    <location>
        <position position="13"/>
    </location>
</feature>
<feature type="modified residue" description="N6-acetyllysine" evidence="3">
    <location>
        <position position="13"/>
    </location>
</feature>
<feature type="modified residue" description="N6-succinyllysine" evidence="3">
    <location>
        <position position="32"/>
    </location>
</feature>
<feature type="modified residue" description="N6-succinyllysine" evidence="3">
    <location>
        <position position="78"/>
    </location>
</feature>
<feature type="modified residue" description="N6-succinyllysine" evidence="3">
    <location>
        <position position="80"/>
    </location>
</feature>
<feature type="modified residue" description="Phosphothreonine" evidence="3">
    <location>
        <position position="81"/>
    </location>
</feature>
<feature type="modified residue" description="Phosphothreonine" evidence="3">
    <location>
        <position position="83"/>
    </location>
</feature>
<feature type="modified residue" description="N6-succinyllysine" evidence="3">
    <location>
        <position position="92"/>
    </location>
</feature>
<reference key="1">
    <citation type="journal article" date="2001" name="Genes Genet. Syst.">
        <title>Molecular evolutionary analysis of a histone gene repeating unit from Drosophila simulans.</title>
        <authorList>
            <person name="Tsunemoto K."/>
            <person name="Matsuo Y."/>
        </authorList>
    </citation>
    <scope>NUCLEOTIDE SEQUENCE [GENOMIC DNA] (HIS4)</scope>
</reference>
<reference key="2">
    <citation type="journal article" date="2007" name="Nature">
        <title>Evolution of genes and genomes on the Drosophila phylogeny.</title>
        <authorList>
            <consortium name="Drosophila 12 genomes consortium"/>
        </authorList>
    </citation>
    <scope>NUCLEOTIDE SEQUENCE [LARGE SCALE GENOMIC DNA] (GD12574 AND GD18968)</scope>
</reference>
<comment type="function">
    <text>Core component of nucleosome. Nucleosomes wrap and compact DNA into chromatin, limiting DNA accessibility to the cellular machineries which require DNA as a template. Histones thereby play a central role in transcription regulation, DNA repair, DNA replication and chromosomal stability. DNA accessibility is regulated via a complex set of post-translational modifications of histones, also called histone code, and nucleosome remodeling.</text>
</comment>
<comment type="subunit">
    <text>The nucleosome is a histone octamer containing two molecules each of H2A, H2B, H3 and H4 assembled in one H3-H4 heterotetramer and two H2A-H2B heterodimers. The octamer wraps approximately 147 bp of DNA.</text>
</comment>
<comment type="subcellular location">
    <subcellularLocation>
        <location evidence="1">Nucleus</location>
    </subcellularLocation>
    <subcellularLocation>
        <location evidence="1">Chromosome</location>
    </subcellularLocation>
</comment>
<comment type="PTM">
    <text evidence="3">Acetylated on Lys-6 (H4K5ac) and Lys-13 (H4K12ac) during prophase I of meiosis. Phosphorylation of H2A 'Thr-119' is a prerequisite for H4 Lys-6 acetylation but not for H4 Lys-13 acetylation. Acetylated on Lys-6 and Lys-13 by the Ada2a-containing (ATAC) histone acetyltransferase complex.</text>
</comment>
<comment type="similarity">
    <text evidence="5">Belongs to the histone H4 family.</text>
</comment>
<keyword id="KW-0007">Acetylation</keyword>
<keyword id="KW-0158">Chromosome</keyword>
<keyword id="KW-0238">DNA-binding</keyword>
<keyword id="KW-0488">Methylation</keyword>
<keyword id="KW-0544">Nucleosome core</keyword>
<keyword id="KW-0539">Nucleus</keyword>
<keyword id="KW-0597">Phosphoprotein</keyword>
<keyword id="KW-1185">Reference proteome</keyword>
<proteinExistence type="inferred from homology"/>
<name>H4_DROSI</name>